<feature type="initiator methionine" description="Removed" evidence="3">
    <location>
        <position position="1"/>
    </location>
</feature>
<feature type="chain" id="PRO_0000318530" description="CREB-regulated transcription coactivator 2">
    <location>
        <begin position="2"/>
        <end position="691"/>
    </location>
</feature>
<feature type="region of interest" description="Disordered" evidence="4">
    <location>
        <begin position="1"/>
        <end position="30"/>
    </location>
</feature>
<feature type="region of interest" description="Disordered" evidence="4">
    <location>
        <begin position="174"/>
        <end position="195"/>
    </location>
</feature>
<feature type="region of interest" description="Disordered" evidence="4">
    <location>
        <begin position="280"/>
        <end position="306"/>
    </location>
</feature>
<feature type="region of interest" description="Disordered" evidence="4">
    <location>
        <begin position="335"/>
        <end position="491"/>
    </location>
</feature>
<feature type="region of interest" description="Disordered" evidence="4">
    <location>
        <begin position="513"/>
        <end position="543"/>
    </location>
</feature>
<feature type="short sequence motif" description="Nuclear export signal" evidence="1">
    <location>
        <begin position="271"/>
        <end position="287"/>
    </location>
</feature>
<feature type="compositionally biased region" description="Polar residues" evidence="4">
    <location>
        <begin position="1"/>
        <end position="20"/>
    </location>
</feature>
<feature type="compositionally biased region" description="Polar residues" evidence="4">
    <location>
        <begin position="174"/>
        <end position="186"/>
    </location>
</feature>
<feature type="compositionally biased region" description="Low complexity" evidence="4">
    <location>
        <begin position="335"/>
        <end position="383"/>
    </location>
</feature>
<feature type="compositionally biased region" description="Low complexity" evidence="4">
    <location>
        <begin position="390"/>
        <end position="411"/>
    </location>
</feature>
<feature type="compositionally biased region" description="Polar residues" evidence="4">
    <location>
        <begin position="447"/>
        <end position="468"/>
    </location>
</feature>
<feature type="site" description="Required for ubiquitination and degradation" evidence="1">
    <location>
        <position position="627"/>
    </location>
</feature>
<feature type="modified residue" description="N-acetylalanine" evidence="3">
    <location>
        <position position="2"/>
    </location>
</feature>
<feature type="modified residue" description="Asymmetric dimethylarginine; by PRMT6" evidence="2">
    <location>
        <position position="51"/>
    </location>
</feature>
<feature type="modified residue" description="Phosphoserine" evidence="3">
    <location>
        <position position="70"/>
    </location>
</feature>
<feature type="modified residue" description="Phosphoserine" evidence="3">
    <location>
        <position position="86"/>
    </location>
</feature>
<feature type="modified residue" description="Phosphoserine" evidence="3">
    <location>
        <position position="90"/>
    </location>
</feature>
<feature type="modified residue" description="Asymmetric dimethylarginine; by PRMT6" evidence="2">
    <location>
        <position position="99"/>
    </location>
</feature>
<feature type="modified residue" description="Asymmetric dimethylarginine; by PRMT6" evidence="2">
    <location>
        <position position="120"/>
    </location>
</feature>
<feature type="modified residue" description="Asymmetric dimethylarginine; by PRMT6" evidence="2">
    <location>
        <position position="123"/>
    </location>
</feature>
<feature type="modified residue" description="Phosphoserine" evidence="3">
    <location>
        <position position="136"/>
    </location>
</feature>
<feature type="modified residue" description="Asymmetric dimethylarginine; by PRMT6" evidence="2">
    <location>
        <position position="161"/>
    </location>
</feature>
<feature type="modified residue" description="Asymmetric dimethylarginine; by PRMT6" evidence="2">
    <location>
        <position position="168"/>
    </location>
</feature>
<feature type="modified residue" description="Phosphothreonine" evidence="2">
    <location>
        <position position="169"/>
    </location>
</feature>
<feature type="modified residue" description="Phosphoserine; by AMPK, MARK2, SIK1 and SIK2" evidence="3">
    <location>
        <position position="171"/>
    </location>
</feature>
<feature type="modified residue" description="Phosphothreonine" evidence="3">
    <location>
        <position position="192"/>
    </location>
</feature>
<feature type="modified residue" description="Phosphoserine; by MARK2" evidence="3">
    <location>
        <position position="274"/>
    </location>
</feature>
<feature type="modified residue" description="Phosphoserine" evidence="3">
    <location>
        <position position="306"/>
    </location>
</feature>
<feature type="modified residue" description="Phosphoserine" evidence="3">
    <location>
        <position position="368"/>
    </location>
</feature>
<feature type="modified residue" description="Phosphoserine" evidence="3">
    <location>
        <position position="393"/>
    </location>
</feature>
<feature type="modified residue" description="Phosphoserine" evidence="3">
    <location>
        <position position="433"/>
    </location>
</feature>
<feature type="modified residue" description="Phosphoserine" evidence="3">
    <location>
        <position position="456"/>
    </location>
</feature>
<feature type="modified residue" description="Phosphotyrosine" evidence="3">
    <location>
        <position position="488"/>
    </location>
</feature>
<feature type="modified residue" description="Phosphoserine" evidence="3">
    <location>
        <position position="489"/>
    </location>
</feature>
<feature type="modified residue" description="Phosphoserine" evidence="3">
    <location>
        <position position="492"/>
    </location>
</feature>
<feature type="modified residue" description="Phosphothreonine" evidence="3">
    <location>
        <position position="501"/>
    </location>
</feature>
<feature type="modified residue" description="Phosphoserine" evidence="6">
    <location>
        <position position="611"/>
    </location>
</feature>
<feature type="modified residue" description="Phosphoserine" evidence="2">
    <location>
        <position position="621"/>
    </location>
</feature>
<feature type="modified residue" description="Phosphoserine" evidence="3">
    <location>
        <position position="622"/>
    </location>
</feature>
<feature type="cross-link" description="Glycyl lysine isopeptide (Lys-Gly) (interchain with G-Cter in SUMO2)" evidence="3">
    <location>
        <position position="234"/>
    </location>
</feature>
<gene>
    <name type="primary">Crtc2</name>
    <name type="synonym">Torc2</name>
</gene>
<reference key="1">
    <citation type="submission" date="2005-08" db="EMBL/GenBank/DDBJ databases">
        <title>TORC2 in central nervous system.</title>
        <authorList>
            <person name="Wu H."/>
            <person name="Miao S."/>
            <person name="Shen H."/>
            <person name="Xiong Z."/>
        </authorList>
    </citation>
    <scope>NUCLEOTIDE SEQUENCE [MRNA]</scope>
    <source>
        <strain>Sprague-Dawley</strain>
    </source>
</reference>
<reference key="2">
    <citation type="journal article" date="2012" name="Nat. Commun.">
        <title>Quantitative maps of protein phosphorylation sites across 14 different rat organs and tissues.</title>
        <authorList>
            <person name="Lundby A."/>
            <person name="Secher A."/>
            <person name="Lage K."/>
            <person name="Nordsborg N.B."/>
            <person name="Dmytriyev A."/>
            <person name="Lundby C."/>
            <person name="Olsen J.V."/>
        </authorList>
    </citation>
    <scope>PHOSPHORYLATION [LARGE SCALE ANALYSIS] AT SER-611</scope>
    <scope>IDENTIFICATION BY MASS SPECTROMETRY [LARGE SCALE ANALYSIS]</scope>
</reference>
<protein>
    <recommendedName>
        <fullName>CREB-regulated transcription coactivator 2</fullName>
    </recommendedName>
    <alternativeName>
        <fullName>Transducer of regulated cAMP response element-binding protein 2</fullName>
        <shortName>TORC-2</shortName>
        <shortName>Transducer of CREB protein 2</shortName>
    </alternativeName>
</protein>
<comment type="function">
    <text evidence="1">Transcriptional coactivator for CREB1 which activates transcription through both consensus and variant cAMP response element (CRE) sites. Acts as a coactivator, in the SIK/TORC signaling pathway, being active when dephosphorylated and acts independently of CREB1 'Ser-133' phosphorylation. Enhances the interaction of CREB1 with TAF4. Regulates gluconeogenesis as a component of the LKB1/AMPK/TORC2 signaling pathway. Regulates the expression of specific genes such as the steroidogenic gene, StAR. Potent coactivator of PPARGC1A and inducer of mitochondrial biogenesis in muscle cells (By similarity).</text>
</comment>
<comment type="subunit">
    <text evidence="2 3">Binds, as a tetramer, through its N-terminal region, with the bZIP domain of CREB1. 'Arg-314' in the bZIP domain of CREB1 is essential for this interaction. Interaction, via its C-terminal, with TAF4, enhances recruitment of TAF4 to CREB1. Interacts with SIK2. Interacts with 14-3-3 proteins, YWHAB and YWHAG. Interacts (probably when phosphorylated at Ser-171) with YWHAE. Interacts with calmodulin-dependent catalytic subunit PPP3CA/calcineurin A (By similarity). Interaction with COP1 mediates nuclear export and degradation of CRTC2 (By similarity).</text>
</comment>
<comment type="subcellular location">
    <subcellularLocation>
        <location evidence="3">Cytoplasm</location>
    </subcellularLocation>
    <subcellularLocation>
        <location evidence="3">Nucleus</location>
    </subcellularLocation>
    <text evidence="3">Translocated from the nucleus to the cytoplasm on interaction of the phosphorylated form with 14-3-3 protein. In response to cAMP levels and glucagon, relocated to the nucleus.</text>
</comment>
<comment type="PTM">
    <text evidence="2 3">Phosphorylation/dephosphorylation states of Ser-171 are required for regulating transduction of CREB activity. CRTCs/TORCs are inactive when phosphorylated, and active when dephosphorylated at this site. This primary site of phosphorylation, is regulated by cAMP and calcium levels and is dependent on the phosphorylation of SIKs (SIK1 and SIK2) by LKB1 (By similarity). Following adenylyl cyclase activation, dephosphorylated at Ser-171 by PPP3CA/calcineurin A resulting in CRTC2 dissociation from 14-3-3 proteins and PPP3CA (By similarity). Both insulin and AMPK increase this phosphorylation of CRTC2 while glucagon suppresses it. Phosphorylation at Ser-274 by MARK2 is induced under low glucose conditions and dephosphorylated in response to glucose influx. Phosphorylation at Ser-274 promotes interaction with 14-3-3 proteins and translocation to the cytoplasm (By similarity).</text>
</comment>
<comment type="PTM">
    <text evidence="2">Asymmetric dimethylation of arginine resisues by PRMT6 enhances the association of CRTC2 with CREB on the promoters of gluconeogenic genes.</text>
</comment>
<comment type="similarity">
    <text evidence="5">Belongs to the TORC family.</text>
</comment>
<evidence type="ECO:0000250" key="1"/>
<evidence type="ECO:0000250" key="2">
    <source>
        <dbReference type="UniProtKB" id="Q3U182"/>
    </source>
</evidence>
<evidence type="ECO:0000250" key="3">
    <source>
        <dbReference type="UniProtKB" id="Q53ET0"/>
    </source>
</evidence>
<evidence type="ECO:0000256" key="4">
    <source>
        <dbReference type="SAM" id="MobiDB-lite"/>
    </source>
</evidence>
<evidence type="ECO:0000305" key="5"/>
<evidence type="ECO:0007744" key="6">
    <source>
    </source>
</evidence>
<keyword id="KW-0007">Acetylation</keyword>
<keyword id="KW-0010">Activator</keyword>
<keyword id="KW-0963">Cytoplasm</keyword>
<keyword id="KW-1017">Isopeptide bond</keyword>
<keyword id="KW-0488">Methylation</keyword>
<keyword id="KW-0539">Nucleus</keyword>
<keyword id="KW-0597">Phosphoprotein</keyword>
<keyword id="KW-1185">Reference proteome</keyword>
<keyword id="KW-0804">Transcription</keyword>
<keyword id="KW-0805">Transcription regulation</keyword>
<keyword id="KW-0832">Ubl conjugation</keyword>
<sequence>MATSGANGPGSATASASNPRKFSEKIALQKQRQAEETAAFEEVMMDIGSTRLQAQKLRLAYTRSSHYGGSLPNVNQIGCGLAEFQSPLHSPLDSSRSTRHHGLVERVQRDPRRMVSPLRRYPRHIDSSPYSPAYLSPPPESGWRRMMPWGNLPAEKGQLFRLPSALNRTSSDSALHTSVMNPNPQDTYPGPTPPSVLPSRRGGFLDGEMDAKVPAIEENLVDDKHLLKPWDAKKLSSSSSRPRSCEVPGINIFPSPDQPANVPVLPPAMSTGGSLPDLTNLHFPPPLPTPLDPEETVYPSLSGGNSTTNLTHTMTHLGISGGLGLGPSYDVPGLHSPLSHPSLQSSLSNPNLQASLSSPQPQLQGSHSHPSLPASSLAHHALPTTSLGHPSLSAPALSSSSSSSSTSSPVLSAPPYPASTPGASPRHRRVPLSPLSLPAGPADARRSQQQLPKQFSPTMSPTLSSITQGVPLDTSKLPTDQRLPPYPYSPPSLVIPSHPPTPKSLQQLPSQACLVQPSGGQPPGRQPHYGTLYPPGSSGHGQQPYHRPINDFSLGNLEQFNMESPSTSLVLDPPAFSEGPGFLGSEGSVSGPQDSHVLNHQNLTHCSRHGSGPNIILTGDSSPGFSKEIAAALAGVPGFEVSASGLELGLGLEDELRMEPLGLEGLTMLSDPCALLPDPAVEDSFRSDRLQ</sequence>
<organism>
    <name type="scientific">Rattus norvegicus</name>
    <name type="common">Rat</name>
    <dbReference type="NCBI Taxonomy" id="10116"/>
    <lineage>
        <taxon>Eukaryota</taxon>
        <taxon>Metazoa</taxon>
        <taxon>Chordata</taxon>
        <taxon>Craniata</taxon>
        <taxon>Vertebrata</taxon>
        <taxon>Euteleostomi</taxon>
        <taxon>Mammalia</taxon>
        <taxon>Eutheria</taxon>
        <taxon>Euarchontoglires</taxon>
        <taxon>Glires</taxon>
        <taxon>Rodentia</taxon>
        <taxon>Myomorpha</taxon>
        <taxon>Muroidea</taxon>
        <taxon>Muridae</taxon>
        <taxon>Murinae</taxon>
        <taxon>Rattus</taxon>
    </lineage>
</organism>
<proteinExistence type="evidence at protein level"/>
<name>CRTC2_RAT</name>
<accession>Q3LRZ1</accession>
<dbReference type="EMBL" id="DQ185515">
    <property type="protein sequence ID" value="ABA28301.1"/>
    <property type="molecule type" value="mRNA"/>
</dbReference>
<dbReference type="RefSeq" id="NP_001029067.1">
    <property type="nucleotide sequence ID" value="NM_001033895.2"/>
</dbReference>
<dbReference type="RefSeq" id="XP_063137896.1">
    <property type="nucleotide sequence ID" value="XM_063281826.1"/>
</dbReference>
<dbReference type="SMR" id="Q3LRZ1"/>
<dbReference type="BioGRID" id="259674">
    <property type="interactions" value="3"/>
</dbReference>
<dbReference type="FunCoup" id="Q3LRZ1">
    <property type="interactions" value="2137"/>
</dbReference>
<dbReference type="STRING" id="10116.ENSRNOP00000068813"/>
<dbReference type="GlyGen" id="Q3LRZ1">
    <property type="glycosylation" value="3 sites"/>
</dbReference>
<dbReference type="iPTMnet" id="Q3LRZ1"/>
<dbReference type="PhosphoSitePlus" id="Q3LRZ1"/>
<dbReference type="jPOST" id="Q3LRZ1"/>
<dbReference type="PaxDb" id="10116-ENSRNOP00000021700"/>
<dbReference type="GeneID" id="310615"/>
<dbReference type="KEGG" id="rno:310615"/>
<dbReference type="UCSC" id="RGD:1308903">
    <property type="organism name" value="rat"/>
</dbReference>
<dbReference type="AGR" id="RGD:1308903"/>
<dbReference type="CTD" id="200186"/>
<dbReference type="RGD" id="1308903">
    <property type="gene designation" value="Crtc2"/>
</dbReference>
<dbReference type="VEuPathDB" id="HostDB:ENSRNOG00000056337"/>
<dbReference type="eggNOG" id="ENOG502QVWA">
    <property type="taxonomic scope" value="Eukaryota"/>
</dbReference>
<dbReference type="HOGENOM" id="CLU_019357_1_0_1"/>
<dbReference type="InParanoid" id="Q3LRZ1"/>
<dbReference type="OrthoDB" id="84619at9989"/>
<dbReference type="PhylomeDB" id="Q3LRZ1"/>
<dbReference type="PRO" id="PR:Q3LRZ1"/>
<dbReference type="Proteomes" id="UP000002494">
    <property type="component" value="Chromosome 2"/>
</dbReference>
<dbReference type="Bgee" id="ENSRNOG00000056337">
    <property type="expression patterns" value="Expressed in spleen and 20 other cell types or tissues"/>
</dbReference>
<dbReference type="ExpressionAtlas" id="Q3LRZ1">
    <property type="expression patterns" value="baseline and differential"/>
</dbReference>
<dbReference type="GO" id="GO:0005737">
    <property type="term" value="C:cytoplasm"/>
    <property type="evidence" value="ECO:0000250"/>
    <property type="project" value="UniProtKB"/>
</dbReference>
<dbReference type="GO" id="GO:0005634">
    <property type="term" value="C:nucleus"/>
    <property type="evidence" value="ECO:0000250"/>
    <property type="project" value="UniProtKB"/>
</dbReference>
<dbReference type="GO" id="GO:0008140">
    <property type="term" value="F:cAMP response element binding protein binding"/>
    <property type="evidence" value="ECO:0000318"/>
    <property type="project" value="GO_Central"/>
</dbReference>
<dbReference type="GO" id="GO:0003682">
    <property type="term" value="F:chromatin binding"/>
    <property type="evidence" value="ECO:0000314"/>
    <property type="project" value="RGD"/>
</dbReference>
<dbReference type="GO" id="GO:0003713">
    <property type="term" value="F:transcription coactivator activity"/>
    <property type="evidence" value="ECO:0000318"/>
    <property type="project" value="GO_Central"/>
</dbReference>
<dbReference type="GO" id="GO:0071320">
    <property type="term" value="P:cellular response to cAMP"/>
    <property type="evidence" value="ECO:0000318"/>
    <property type="project" value="GO_Central"/>
</dbReference>
<dbReference type="GO" id="GO:0006094">
    <property type="term" value="P:gluconeogenesis"/>
    <property type="evidence" value="ECO:0000250"/>
    <property type="project" value="UniProtKB"/>
</dbReference>
<dbReference type="GO" id="GO:0042593">
    <property type="term" value="P:glucose homeostasis"/>
    <property type="evidence" value="ECO:0000250"/>
    <property type="project" value="UniProtKB"/>
</dbReference>
<dbReference type="GO" id="GO:0032793">
    <property type="term" value="P:positive regulation of CREB transcription factor activity"/>
    <property type="evidence" value="ECO:0000250"/>
    <property type="project" value="UniProtKB"/>
</dbReference>
<dbReference type="GO" id="GO:0045944">
    <property type="term" value="P:positive regulation of transcription by RNA polymerase II"/>
    <property type="evidence" value="ECO:0000266"/>
    <property type="project" value="RGD"/>
</dbReference>
<dbReference type="GO" id="GO:0051289">
    <property type="term" value="P:protein homotetramerization"/>
    <property type="evidence" value="ECO:0007669"/>
    <property type="project" value="InterPro"/>
</dbReference>
<dbReference type="InterPro" id="IPR024786">
    <property type="entry name" value="TORC"/>
</dbReference>
<dbReference type="InterPro" id="IPR024785">
    <property type="entry name" value="TORC_C"/>
</dbReference>
<dbReference type="InterPro" id="IPR024784">
    <property type="entry name" value="TORC_M"/>
</dbReference>
<dbReference type="InterPro" id="IPR024783">
    <property type="entry name" value="TORC_N"/>
</dbReference>
<dbReference type="PANTHER" id="PTHR13589">
    <property type="entry name" value="CREB-REGULATED TRANSCRIPTION COACTIVATOR"/>
    <property type="match status" value="1"/>
</dbReference>
<dbReference type="PANTHER" id="PTHR13589:SF6">
    <property type="entry name" value="CREB-REGULATED TRANSCRIPTION COACTIVATOR 2"/>
    <property type="match status" value="1"/>
</dbReference>
<dbReference type="Pfam" id="PF12886">
    <property type="entry name" value="TORC_C"/>
    <property type="match status" value="1"/>
</dbReference>
<dbReference type="Pfam" id="PF12885">
    <property type="entry name" value="TORC_M"/>
    <property type="match status" value="1"/>
</dbReference>
<dbReference type="Pfam" id="PF12884">
    <property type="entry name" value="TORC_N"/>
    <property type="match status" value="1"/>
</dbReference>